<name>PLSX_PROMA</name>
<protein>
    <recommendedName>
        <fullName>Phosphate acyltransferase</fullName>
        <ecNumber>2.3.1.274</ecNumber>
    </recommendedName>
    <alternativeName>
        <fullName>Acyl-ACP phosphotransacylase</fullName>
    </alternativeName>
    <alternativeName>
        <fullName>Acyl-[acyl-carrier-protein]--phosphate acyltransferase</fullName>
    </alternativeName>
    <alternativeName>
        <fullName>Phosphate-acyl-ACP acyltransferase</fullName>
    </alternativeName>
</protein>
<keyword id="KW-0963">Cytoplasm</keyword>
<keyword id="KW-0444">Lipid biosynthesis</keyword>
<keyword id="KW-0443">Lipid metabolism</keyword>
<keyword id="KW-0594">Phospholipid biosynthesis</keyword>
<keyword id="KW-1208">Phospholipid metabolism</keyword>
<keyword id="KW-1185">Reference proteome</keyword>
<keyword id="KW-0808">Transferase</keyword>
<feature type="chain" id="PRO_0000189919" description="Phosphate acyltransferase">
    <location>
        <begin position="1"/>
        <end position="436"/>
    </location>
</feature>
<organism>
    <name type="scientific">Prochlorococcus marinus (strain SARG / CCMP1375 / SS120)</name>
    <dbReference type="NCBI Taxonomy" id="167539"/>
    <lineage>
        <taxon>Bacteria</taxon>
        <taxon>Bacillati</taxon>
        <taxon>Cyanobacteriota</taxon>
        <taxon>Cyanophyceae</taxon>
        <taxon>Synechococcales</taxon>
        <taxon>Prochlorococcaceae</taxon>
        <taxon>Prochlorococcus</taxon>
    </lineage>
</organism>
<accession>Q7VE56</accession>
<gene>
    <name type="primary">plsX</name>
    <name type="ordered locus">Pro_0157</name>
</gene>
<proteinExistence type="inferred from homology"/>
<sequence length="436" mass="46220">MDNESRSKAIRPKAIRRLVIWYRRNSAVTTLVDTATNSASAAGNVAGSVVSSAGSVVSSAGSIARSTLQPLVFDPLRRLQAGPNELDRNDIANSKRLWVAVDGMGGDNAPGSILEGCLQAIDRLPLCIKFVGEIEKIHSAADELGISDLLNQLISAGNIELVASGPSIGMDEEATAVRKKRDASINIAMDLVKKGEALSVYSAGNSGALMAAAIFRLGRLAGIDRPAIGALFPTKDPGQPVLVLDVGANMDCKPAYLHQFALLGNIYSRDVLQVQNPRIGLLNIGEEECKGNDLSLRTFELLKEEERLDFVGNCEGRDVLSGDFDVVVCDGFTGNVLLKFLESVGSVLLDVLRAELPRGRRGKVGSAFLRNNLKRIKKRLDHAEHGGALLLGVNGICVIGHGSSKALSVVSALRIAHSAASHGVMDDLAALQPPQP</sequence>
<reference key="1">
    <citation type="journal article" date="2003" name="Proc. Natl. Acad. Sci. U.S.A.">
        <title>Genome sequence of the cyanobacterium Prochlorococcus marinus SS120, a nearly minimal oxyphototrophic genome.</title>
        <authorList>
            <person name="Dufresne A."/>
            <person name="Salanoubat M."/>
            <person name="Partensky F."/>
            <person name="Artiguenave F."/>
            <person name="Axmann I.M."/>
            <person name="Barbe V."/>
            <person name="Duprat S."/>
            <person name="Galperin M.Y."/>
            <person name="Koonin E.V."/>
            <person name="Le Gall F."/>
            <person name="Makarova K.S."/>
            <person name="Ostrowski M."/>
            <person name="Oztas S."/>
            <person name="Robert C."/>
            <person name="Rogozin I.B."/>
            <person name="Scanlan D.J."/>
            <person name="Tandeau de Marsac N."/>
            <person name="Weissenbach J."/>
            <person name="Wincker P."/>
            <person name="Wolf Y.I."/>
            <person name="Hess W.R."/>
        </authorList>
    </citation>
    <scope>NUCLEOTIDE SEQUENCE [LARGE SCALE GENOMIC DNA]</scope>
    <source>
        <strain>SARG / CCMP1375 / SS120</strain>
    </source>
</reference>
<comment type="function">
    <text evidence="1">Catalyzes the reversible formation of acyl-phosphate (acyl-PO(4)) from acyl-[acyl-carrier-protein] (acyl-ACP). This enzyme utilizes acyl-ACP as fatty acyl donor, but not acyl-CoA (By similarity).</text>
</comment>
<comment type="catalytic activity">
    <reaction>
        <text>a fatty acyl-[ACP] + phosphate = an acyl phosphate + holo-[ACP]</text>
        <dbReference type="Rhea" id="RHEA:42292"/>
        <dbReference type="Rhea" id="RHEA-COMP:9685"/>
        <dbReference type="Rhea" id="RHEA-COMP:14125"/>
        <dbReference type="ChEBI" id="CHEBI:43474"/>
        <dbReference type="ChEBI" id="CHEBI:59918"/>
        <dbReference type="ChEBI" id="CHEBI:64479"/>
        <dbReference type="ChEBI" id="CHEBI:138651"/>
        <dbReference type="EC" id="2.3.1.274"/>
    </reaction>
</comment>
<comment type="pathway">
    <text>Lipid metabolism; phospholipid metabolism.</text>
</comment>
<comment type="subunit">
    <text evidence="1">Homodimer. Probably interacts with PlsY (By similarity).</text>
</comment>
<comment type="subcellular location">
    <subcellularLocation>
        <location evidence="1">Cytoplasm</location>
    </subcellularLocation>
    <text evidence="1">Associated with the membrane possibly through PlsY.</text>
</comment>
<comment type="similarity">
    <text evidence="2">Belongs to the PlsX family.</text>
</comment>
<dbReference type="EC" id="2.3.1.274"/>
<dbReference type="EMBL" id="AE017126">
    <property type="protein sequence ID" value="AAP99203.1"/>
    <property type="molecule type" value="Genomic_DNA"/>
</dbReference>
<dbReference type="RefSeq" id="NP_874551.1">
    <property type="nucleotide sequence ID" value="NC_005042.1"/>
</dbReference>
<dbReference type="RefSeq" id="WP_011124312.1">
    <property type="nucleotide sequence ID" value="NC_005042.1"/>
</dbReference>
<dbReference type="SMR" id="Q7VE56"/>
<dbReference type="STRING" id="167539.Pro_0157"/>
<dbReference type="EnsemblBacteria" id="AAP99203">
    <property type="protein sequence ID" value="AAP99203"/>
    <property type="gene ID" value="Pro_0157"/>
</dbReference>
<dbReference type="KEGG" id="pma:Pro_0157"/>
<dbReference type="PATRIC" id="fig|167539.5.peg.163"/>
<dbReference type="eggNOG" id="COG0416">
    <property type="taxonomic scope" value="Bacteria"/>
</dbReference>
<dbReference type="HOGENOM" id="CLU_039379_0_0_3"/>
<dbReference type="OrthoDB" id="9806408at2"/>
<dbReference type="UniPathway" id="UPA00085"/>
<dbReference type="Proteomes" id="UP000001420">
    <property type="component" value="Chromosome"/>
</dbReference>
<dbReference type="GO" id="GO:0005737">
    <property type="term" value="C:cytoplasm"/>
    <property type="evidence" value="ECO:0007669"/>
    <property type="project" value="UniProtKB-SubCell"/>
</dbReference>
<dbReference type="GO" id="GO:0043811">
    <property type="term" value="F:phosphate:acyl-[acyl carrier protein] acyltransferase activity"/>
    <property type="evidence" value="ECO:0007669"/>
    <property type="project" value="UniProtKB-UniRule"/>
</dbReference>
<dbReference type="GO" id="GO:0006633">
    <property type="term" value="P:fatty acid biosynthetic process"/>
    <property type="evidence" value="ECO:0007669"/>
    <property type="project" value="UniProtKB-UniRule"/>
</dbReference>
<dbReference type="GO" id="GO:0008654">
    <property type="term" value="P:phospholipid biosynthetic process"/>
    <property type="evidence" value="ECO:0007669"/>
    <property type="project" value="UniProtKB-KW"/>
</dbReference>
<dbReference type="Gene3D" id="3.40.718.10">
    <property type="entry name" value="Isopropylmalate Dehydrogenase"/>
    <property type="match status" value="1"/>
</dbReference>
<dbReference type="HAMAP" id="MF_00019">
    <property type="entry name" value="PlsX"/>
    <property type="match status" value="1"/>
</dbReference>
<dbReference type="InterPro" id="IPR003664">
    <property type="entry name" value="FA_synthesis"/>
</dbReference>
<dbReference type="InterPro" id="IPR012281">
    <property type="entry name" value="Phospholipid_synth_PlsX-like"/>
</dbReference>
<dbReference type="NCBIfam" id="TIGR00182">
    <property type="entry name" value="plsX"/>
    <property type="match status" value="1"/>
</dbReference>
<dbReference type="NCBIfam" id="NF010419">
    <property type="entry name" value="PRK13845.1"/>
    <property type="match status" value="1"/>
</dbReference>
<dbReference type="PANTHER" id="PTHR30100">
    <property type="entry name" value="FATTY ACID/PHOSPHOLIPID SYNTHESIS PROTEIN PLSX"/>
    <property type="match status" value="1"/>
</dbReference>
<dbReference type="PANTHER" id="PTHR30100:SF1">
    <property type="entry name" value="PHOSPHATE ACYLTRANSFERASE"/>
    <property type="match status" value="1"/>
</dbReference>
<dbReference type="Pfam" id="PF02504">
    <property type="entry name" value="FA_synthesis"/>
    <property type="match status" value="1"/>
</dbReference>
<dbReference type="SUPFAM" id="SSF53659">
    <property type="entry name" value="Isocitrate/Isopropylmalate dehydrogenase-like"/>
    <property type="match status" value="1"/>
</dbReference>
<evidence type="ECO:0000250" key="1"/>
<evidence type="ECO:0000305" key="2"/>